<dbReference type="EC" id="2.7.4.3" evidence="1"/>
<dbReference type="EMBL" id="AP007255">
    <property type="protein sequence ID" value="BAE51914.1"/>
    <property type="molecule type" value="Genomic_DNA"/>
</dbReference>
<dbReference type="RefSeq" id="WP_011385485.1">
    <property type="nucleotide sequence ID" value="NC_007626.1"/>
</dbReference>
<dbReference type="SMR" id="Q2W2L1"/>
<dbReference type="STRING" id="342108.amb3110"/>
<dbReference type="KEGG" id="mag:amb3110"/>
<dbReference type="HOGENOM" id="CLU_032354_1_2_5"/>
<dbReference type="OrthoDB" id="9805030at2"/>
<dbReference type="UniPathway" id="UPA00588">
    <property type="reaction ID" value="UER00649"/>
</dbReference>
<dbReference type="Proteomes" id="UP000007058">
    <property type="component" value="Chromosome"/>
</dbReference>
<dbReference type="GO" id="GO:0005737">
    <property type="term" value="C:cytoplasm"/>
    <property type="evidence" value="ECO:0007669"/>
    <property type="project" value="UniProtKB-SubCell"/>
</dbReference>
<dbReference type="GO" id="GO:0004017">
    <property type="term" value="F:adenylate kinase activity"/>
    <property type="evidence" value="ECO:0007669"/>
    <property type="project" value="UniProtKB-UniRule"/>
</dbReference>
<dbReference type="GO" id="GO:0005524">
    <property type="term" value="F:ATP binding"/>
    <property type="evidence" value="ECO:0007669"/>
    <property type="project" value="UniProtKB-UniRule"/>
</dbReference>
<dbReference type="GO" id="GO:0008270">
    <property type="term" value="F:zinc ion binding"/>
    <property type="evidence" value="ECO:0007669"/>
    <property type="project" value="UniProtKB-UniRule"/>
</dbReference>
<dbReference type="GO" id="GO:0044209">
    <property type="term" value="P:AMP salvage"/>
    <property type="evidence" value="ECO:0007669"/>
    <property type="project" value="UniProtKB-UniRule"/>
</dbReference>
<dbReference type="CDD" id="cd01428">
    <property type="entry name" value="ADK"/>
    <property type="match status" value="1"/>
</dbReference>
<dbReference type="FunFam" id="3.40.50.300:FF:000106">
    <property type="entry name" value="Adenylate kinase mitochondrial"/>
    <property type="match status" value="1"/>
</dbReference>
<dbReference type="Gene3D" id="3.40.50.300">
    <property type="entry name" value="P-loop containing nucleotide triphosphate hydrolases"/>
    <property type="match status" value="1"/>
</dbReference>
<dbReference type="HAMAP" id="MF_00235">
    <property type="entry name" value="Adenylate_kinase_Adk"/>
    <property type="match status" value="1"/>
</dbReference>
<dbReference type="InterPro" id="IPR006259">
    <property type="entry name" value="Adenyl_kin_sub"/>
</dbReference>
<dbReference type="InterPro" id="IPR000850">
    <property type="entry name" value="Adenylat/UMP-CMP_kin"/>
</dbReference>
<dbReference type="InterPro" id="IPR033690">
    <property type="entry name" value="Adenylat_kinase_CS"/>
</dbReference>
<dbReference type="InterPro" id="IPR007862">
    <property type="entry name" value="Adenylate_kinase_lid-dom"/>
</dbReference>
<dbReference type="InterPro" id="IPR027417">
    <property type="entry name" value="P-loop_NTPase"/>
</dbReference>
<dbReference type="NCBIfam" id="TIGR01351">
    <property type="entry name" value="adk"/>
    <property type="match status" value="1"/>
</dbReference>
<dbReference type="NCBIfam" id="NF001380">
    <property type="entry name" value="PRK00279.1-2"/>
    <property type="match status" value="1"/>
</dbReference>
<dbReference type="NCBIfam" id="NF001381">
    <property type="entry name" value="PRK00279.1-3"/>
    <property type="match status" value="1"/>
</dbReference>
<dbReference type="NCBIfam" id="NF011100">
    <property type="entry name" value="PRK14527.1"/>
    <property type="match status" value="1"/>
</dbReference>
<dbReference type="NCBIfam" id="NF011105">
    <property type="entry name" value="PRK14532.1"/>
    <property type="match status" value="1"/>
</dbReference>
<dbReference type="PANTHER" id="PTHR23359">
    <property type="entry name" value="NUCLEOTIDE KINASE"/>
    <property type="match status" value="1"/>
</dbReference>
<dbReference type="Pfam" id="PF00406">
    <property type="entry name" value="ADK"/>
    <property type="match status" value="1"/>
</dbReference>
<dbReference type="Pfam" id="PF05191">
    <property type="entry name" value="ADK_lid"/>
    <property type="match status" value="1"/>
</dbReference>
<dbReference type="PRINTS" id="PR00094">
    <property type="entry name" value="ADENYLTKNASE"/>
</dbReference>
<dbReference type="SUPFAM" id="SSF52540">
    <property type="entry name" value="P-loop containing nucleoside triphosphate hydrolases"/>
    <property type="match status" value="1"/>
</dbReference>
<dbReference type="PROSITE" id="PS00113">
    <property type="entry name" value="ADENYLATE_KINASE"/>
    <property type="match status" value="1"/>
</dbReference>
<gene>
    <name evidence="1" type="primary">adk</name>
    <name type="ordered locus">amb3110</name>
</gene>
<reference key="1">
    <citation type="journal article" date="2005" name="DNA Res.">
        <title>Complete genome sequence of the facultative anaerobic magnetotactic bacterium Magnetospirillum sp. strain AMB-1.</title>
        <authorList>
            <person name="Matsunaga T."/>
            <person name="Okamura Y."/>
            <person name="Fukuda Y."/>
            <person name="Wahyudi A.T."/>
            <person name="Murase Y."/>
            <person name="Takeyama H."/>
        </authorList>
    </citation>
    <scope>NUCLEOTIDE SEQUENCE [LARGE SCALE GENOMIC DNA]</scope>
    <source>
        <strain>ATCC 700264 / AMB-1</strain>
    </source>
</reference>
<name>KAD_PARM1</name>
<evidence type="ECO:0000255" key="1">
    <source>
        <dbReference type="HAMAP-Rule" id="MF_00235"/>
    </source>
</evidence>
<keyword id="KW-0067">ATP-binding</keyword>
<keyword id="KW-0963">Cytoplasm</keyword>
<keyword id="KW-0418">Kinase</keyword>
<keyword id="KW-0479">Metal-binding</keyword>
<keyword id="KW-0545">Nucleotide biosynthesis</keyword>
<keyword id="KW-0547">Nucleotide-binding</keyword>
<keyword id="KW-0808">Transferase</keyword>
<keyword id="KW-0862">Zinc</keyword>
<feature type="chain" id="PRO_1000021740" description="Adenylate kinase">
    <location>
        <begin position="1"/>
        <end position="217"/>
    </location>
</feature>
<feature type="region of interest" description="NMP" evidence="1">
    <location>
        <begin position="30"/>
        <end position="59"/>
    </location>
</feature>
<feature type="region of interest" description="LID" evidence="1">
    <location>
        <begin position="126"/>
        <end position="164"/>
    </location>
</feature>
<feature type="binding site" evidence="1">
    <location>
        <begin position="10"/>
        <end position="15"/>
    </location>
    <ligand>
        <name>ATP</name>
        <dbReference type="ChEBI" id="CHEBI:30616"/>
    </ligand>
</feature>
<feature type="binding site" evidence="1">
    <location>
        <position position="31"/>
    </location>
    <ligand>
        <name>AMP</name>
        <dbReference type="ChEBI" id="CHEBI:456215"/>
    </ligand>
</feature>
<feature type="binding site" evidence="1">
    <location>
        <position position="36"/>
    </location>
    <ligand>
        <name>AMP</name>
        <dbReference type="ChEBI" id="CHEBI:456215"/>
    </ligand>
</feature>
<feature type="binding site" evidence="1">
    <location>
        <begin position="57"/>
        <end position="59"/>
    </location>
    <ligand>
        <name>AMP</name>
        <dbReference type="ChEBI" id="CHEBI:456215"/>
    </ligand>
</feature>
<feature type="binding site" evidence="1">
    <location>
        <begin position="85"/>
        <end position="88"/>
    </location>
    <ligand>
        <name>AMP</name>
        <dbReference type="ChEBI" id="CHEBI:456215"/>
    </ligand>
</feature>
<feature type="binding site" evidence="1">
    <location>
        <position position="92"/>
    </location>
    <ligand>
        <name>AMP</name>
        <dbReference type="ChEBI" id="CHEBI:456215"/>
    </ligand>
</feature>
<feature type="binding site" evidence="1">
    <location>
        <position position="127"/>
    </location>
    <ligand>
        <name>ATP</name>
        <dbReference type="ChEBI" id="CHEBI:30616"/>
    </ligand>
</feature>
<feature type="binding site" evidence="1">
    <location>
        <position position="130"/>
    </location>
    <ligand>
        <name>Zn(2+)</name>
        <dbReference type="ChEBI" id="CHEBI:29105"/>
        <note>structural</note>
    </ligand>
</feature>
<feature type="binding site" evidence="1">
    <location>
        <position position="133"/>
    </location>
    <ligand>
        <name>Zn(2+)</name>
        <dbReference type="ChEBI" id="CHEBI:29105"/>
        <note>structural</note>
    </ligand>
</feature>
<feature type="binding site" evidence="1">
    <location>
        <position position="150"/>
    </location>
    <ligand>
        <name>Zn(2+)</name>
        <dbReference type="ChEBI" id="CHEBI:29105"/>
        <note>structural</note>
    </ligand>
</feature>
<feature type="binding site" evidence="1">
    <location>
        <position position="153"/>
    </location>
    <ligand>
        <name>Zn(2+)</name>
        <dbReference type="ChEBI" id="CHEBI:29105"/>
        <note>structural</note>
    </ligand>
</feature>
<feature type="binding site" evidence="1">
    <location>
        <position position="161"/>
    </location>
    <ligand>
        <name>AMP</name>
        <dbReference type="ChEBI" id="CHEBI:456215"/>
    </ligand>
</feature>
<feature type="binding site" evidence="1">
    <location>
        <position position="172"/>
    </location>
    <ligand>
        <name>AMP</name>
        <dbReference type="ChEBI" id="CHEBI:456215"/>
    </ligand>
</feature>
<feature type="binding site" evidence="1">
    <location>
        <position position="200"/>
    </location>
    <ligand>
        <name>ATP</name>
        <dbReference type="ChEBI" id="CHEBI:30616"/>
    </ligand>
</feature>
<comment type="function">
    <text evidence="1">Catalyzes the reversible transfer of the terminal phosphate group between ATP and AMP. Plays an important role in cellular energy homeostasis and in adenine nucleotide metabolism.</text>
</comment>
<comment type="catalytic activity">
    <reaction evidence="1">
        <text>AMP + ATP = 2 ADP</text>
        <dbReference type="Rhea" id="RHEA:12973"/>
        <dbReference type="ChEBI" id="CHEBI:30616"/>
        <dbReference type="ChEBI" id="CHEBI:456215"/>
        <dbReference type="ChEBI" id="CHEBI:456216"/>
        <dbReference type="EC" id="2.7.4.3"/>
    </reaction>
</comment>
<comment type="pathway">
    <text evidence="1">Purine metabolism; AMP biosynthesis via salvage pathway; AMP from ADP: step 1/1.</text>
</comment>
<comment type="subunit">
    <text evidence="1">Monomer.</text>
</comment>
<comment type="subcellular location">
    <subcellularLocation>
        <location evidence="1">Cytoplasm</location>
    </subcellularLocation>
</comment>
<comment type="domain">
    <text evidence="1">Consists of three domains, a large central CORE domain and two small peripheral domains, NMPbind and LID, which undergo movements during catalysis. The LID domain closes over the site of phosphoryl transfer upon ATP binding. Assembling and dissambling the active center during each catalytic cycle provides an effective means to prevent ATP hydrolysis. Some bacteria have evolved a zinc-coordinating structure that stabilizes the LID domain.</text>
</comment>
<comment type="similarity">
    <text evidence="1">Belongs to the adenylate kinase family.</text>
</comment>
<accession>Q2W2L1</accession>
<proteinExistence type="inferred from homology"/>
<organism>
    <name type="scientific">Paramagnetospirillum magneticum (strain ATCC 700264 / AMB-1)</name>
    <name type="common">Magnetospirillum magneticum</name>
    <dbReference type="NCBI Taxonomy" id="342108"/>
    <lineage>
        <taxon>Bacteria</taxon>
        <taxon>Pseudomonadati</taxon>
        <taxon>Pseudomonadota</taxon>
        <taxon>Alphaproteobacteria</taxon>
        <taxon>Rhodospirillales</taxon>
        <taxon>Magnetospirillaceae</taxon>
        <taxon>Paramagnetospirillum</taxon>
    </lineage>
</organism>
<protein>
    <recommendedName>
        <fullName evidence="1">Adenylate kinase</fullName>
        <shortName evidence="1">AK</shortName>
        <ecNumber evidence="1">2.7.4.3</ecNumber>
    </recommendedName>
    <alternativeName>
        <fullName evidence="1">ATP-AMP transphosphorylase</fullName>
    </alternativeName>
    <alternativeName>
        <fullName evidence="1">ATP:AMP phosphotransferase</fullName>
    </alternativeName>
    <alternativeName>
        <fullName evidence="1">Adenylate monophosphate kinase</fullName>
    </alternativeName>
</protein>
<sequence length="217" mass="23167">MNLVLLGPPGGGKGTQAKRLQDKYGLVQLSTGDMLRAAVASGSEVGKKAKAVMDAGQLVSDEIVIAIIDERLDQADVAKGAIFDGFPRTVAQAEALDAMMAKKGKKLDFAIEIRVPDAYIVERITGRYTCAKCGAGYHDKFQLPQVAGKCDSCGGTEFARRPDDNVDTVTKRLDAYHAQTAPLLPYYDKKGSLKLVDGTMDIADVTKALEGILDASK</sequence>